<reference key="1">
    <citation type="journal article" date="2004" name="Proc. Natl. Acad. Sci. U.S.A.">
        <title>The diploid genome sequence of Candida albicans.</title>
        <authorList>
            <person name="Jones T."/>
            <person name="Federspiel N.A."/>
            <person name="Chibana H."/>
            <person name="Dungan J."/>
            <person name="Kalman S."/>
            <person name="Magee B.B."/>
            <person name="Newport G."/>
            <person name="Thorstenson Y.R."/>
            <person name="Agabian N."/>
            <person name="Magee P.T."/>
            <person name="Davis R.W."/>
            <person name="Scherer S."/>
        </authorList>
    </citation>
    <scope>NUCLEOTIDE SEQUENCE [LARGE SCALE GENOMIC DNA]</scope>
    <source>
        <strain>SC5314 / ATCC MYA-2876</strain>
    </source>
</reference>
<reference key="2">
    <citation type="journal article" date="2007" name="Genome Biol.">
        <title>Assembly of the Candida albicans genome into sixteen supercontigs aligned on the eight chromosomes.</title>
        <authorList>
            <person name="van het Hoog M."/>
            <person name="Rast T.J."/>
            <person name="Martchenko M."/>
            <person name="Grindle S."/>
            <person name="Dignard D."/>
            <person name="Hogues H."/>
            <person name="Cuomo C."/>
            <person name="Berriman M."/>
            <person name="Scherer S."/>
            <person name="Magee B.B."/>
            <person name="Whiteway M."/>
            <person name="Chibana H."/>
            <person name="Nantel A."/>
            <person name="Magee P.T."/>
        </authorList>
    </citation>
    <scope>GENOME REANNOTATION</scope>
    <source>
        <strain>SC5314 / ATCC MYA-2876</strain>
    </source>
</reference>
<reference key="3">
    <citation type="journal article" date="2013" name="Genome Biol.">
        <title>Assembly of a phased diploid Candida albicans genome facilitates allele-specific measurements and provides a simple model for repeat and indel structure.</title>
        <authorList>
            <person name="Muzzey D."/>
            <person name="Schwartz K."/>
            <person name="Weissman J.S."/>
            <person name="Sherlock G."/>
        </authorList>
    </citation>
    <scope>NUCLEOTIDE SEQUENCE [LARGE SCALE GENOMIC DNA]</scope>
    <scope>GENOME REANNOTATION</scope>
    <source>
        <strain>SC5314 / ATCC MYA-2876</strain>
    </source>
</reference>
<reference key="4">
    <citation type="journal article" date="2011" name="Eukaryot. Cell">
        <title>Candida albicans SRR1, a putative two component response regulator gene, is required for stress adaptation, morphogenesis and virulence.</title>
        <authorList>
            <person name="Desai C."/>
            <person name="Mavrianos J."/>
            <person name="Chauhan N."/>
        </authorList>
    </citation>
    <scope>FUNCTION</scope>
    <scope>DISRUPTION PHENOTYPE</scope>
</reference>
<feature type="chain" id="PRO_0000413385" description="Stress response regulator protein 1">
    <location>
        <begin position="1"/>
        <end position="282"/>
    </location>
</feature>
<feature type="domain" description="Response regulatory" evidence="1">
    <location>
        <begin position="155"/>
        <end position="273"/>
    </location>
</feature>
<feature type="region of interest" description="Disordered" evidence="2">
    <location>
        <begin position="12"/>
        <end position="31"/>
    </location>
</feature>
<feature type="region of interest" description="Disordered" evidence="2">
    <location>
        <begin position="43"/>
        <end position="84"/>
    </location>
</feature>
<feature type="region of interest" description="Disordered" evidence="2">
    <location>
        <begin position="112"/>
        <end position="139"/>
    </location>
</feature>
<feature type="compositionally biased region" description="Low complexity" evidence="2">
    <location>
        <begin position="12"/>
        <end position="30"/>
    </location>
</feature>
<feature type="compositionally biased region" description="Low complexity" evidence="2">
    <location>
        <begin position="45"/>
        <end position="58"/>
    </location>
</feature>
<feature type="compositionally biased region" description="Polar residues" evidence="2">
    <location>
        <begin position="66"/>
        <end position="77"/>
    </location>
</feature>
<feature type="compositionally biased region" description="Low complexity" evidence="2">
    <location>
        <begin position="125"/>
        <end position="139"/>
    </location>
</feature>
<feature type="modified residue" description="4-aspartylphosphate" evidence="1">
    <location>
        <position position="206"/>
    </location>
</feature>
<evidence type="ECO:0000255" key="1">
    <source>
        <dbReference type="PROSITE-ProRule" id="PRU00169"/>
    </source>
</evidence>
<evidence type="ECO:0000256" key="2">
    <source>
        <dbReference type="SAM" id="MobiDB-lite"/>
    </source>
</evidence>
<evidence type="ECO:0000269" key="3">
    <source>
    </source>
</evidence>
<protein>
    <recommendedName>
        <fullName>Stress response regulator protein 1</fullName>
    </recommendedName>
</protein>
<accession>Q59M56</accession>
<accession>A0A1D8PT09</accession>
<accession>Q59M67</accession>
<sequence>MISMNPIMIRNNLSRSSSPAAPPTTNHSSTVDYFSIKPKLSLDINSQSDSNSTQSNNNEDTHSEQSDYNSYTHNQYYDSDDDEDDFDIRDQLLDPFDKITLSNCNEEYYSPLTPFDGQTTSPQDSIISSKSSNKSTTVVPSPQFQLTLPKLTTYSFLIVDDNIINLKILNRILLKLFPKCHIVQIQDSKLVKDLLHKQSFDSIFIDIEMPDVNGIDIAQFVRQDTKFDNMGMVAVTTRNSTQDLELFKQCGIDFTFHKPLNYSLDFMANSIDDIIITRKNKI</sequence>
<gene>
    <name type="primary">SRR1</name>
    <name type="ordered locus">CAALFM_CR05610CA</name>
    <name type="ORF">CaO19.13265</name>
    <name type="ORF">CaO19.5843</name>
</gene>
<name>SRR1_CANAL</name>
<organism>
    <name type="scientific">Candida albicans (strain SC5314 / ATCC MYA-2876)</name>
    <name type="common">Yeast</name>
    <dbReference type="NCBI Taxonomy" id="237561"/>
    <lineage>
        <taxon>Eukaryota</taxon>
        <taxon>Fungi</taxon>
        <taxon>Dikarya</taxon>
        <taxon>Ascomycota</taxon>
        <taxon>Saccharomycotina</taxon>
        <taxon>Pichiomycetes</taxon>
        <taxon>Debaryomycetaceae</taxon>
        <taxon>Candida/Lodderomyces clade</taxon>
        <taxon>Candida</taxon>
    </lineage>
</organism>
<keyword id="KW-0597">Phosphoprotein</keyword>
<keyword id="KW-1185">Reference proteome</keyword>
<comment type="function">
    <text evidence="3">Required for stress adaptation, morphogenesis and virulence.</text>
</comment>
<comment type="disruption phenotype">
    <text evidence="3">Causes defects in hyphal development, reduced resistance to osmotic and oxidative stress, and severe virulence attenuation in the mouse model of disseminated candidiasis.</text>
</comment>
<dbReference type="EMBL" id="CP017630">
    <property type="protein sequence ID" value="AOW31277.1"/>
    <property type="molecule type" value="Genomic_DNA"/>
</dbReference>
<dbReference type="RefSeq" id="XP_710798.2">
    <property type="nucleotide sequence ID" value="XM_705706.2"/>
</dbReference>
<dbReference type="SMR" id="Q59M56"/>
<dbReference type="BioGRID" id="1230671">
    <property type="interactions" value="1"/>
</dbReference>
<dbReference type="STRING" id="237561.Q59M56"/>
<dbReference type="EnsemblFungi" id="CR_05610C_A-T">
    <property type="protein sequence ID" value="CR_05610C_A-T-p1"/>
    <property type="gene ID" value="CR_05610C_A"/>
</dbReference>
<dbReference type="GeneID" id="3647589"/>
<dbReference type="KEGG" id="cal:CAALFM_CR05610CA"/>
<dbReference type="CGD" id="CAL0000201009">
    <property type="gene designation" value="SRR1"/>
</dbReference>
<dbReference type="VEuPathDB" id="FungiDB:CR_05610C_A"/>
<dbReference type="eggNOG" id="ENOG502SFN6">
    <property type="taxonomic scope" value="Eukaryota"/>
</dbReference>
<dbReference type="HOGENOM" id="CLU_065405_0_0_1"/>
<dbReference type="InParanoid" id="Q59M56"/>
<dbReference type="OMA" id="FHKPLNY"/>
<dbReference type="OrthoDB" id="303614at2759"/>
<dbReference type="PRO" id="PR:Q59M56"/>
<dbReference type="Proteomes" id="UP000000559">
    <property type="component" value="Chromosome R"/>
</dbReference>
<dbReference type="GO" id="GO:0005737">
    <property type="term" value="C:cytoplasm"/>
    <property type="evidence" value="ECO:0000314"/>
    <property type="project" value="CGD"/>
</dbReference>
<dbReference type="GO" id="GO:0005739">
    <property type="term" value="C:mitochondrion"/>
    <property type="evidence" value="ECO:0000314"/>
    <property type="project" value="CGD"/>
</dbReference>
<dbReference type="GO" id="GO:0005634">
    <property type="term" value="C:nucleus"/>
    <property type="evidence" value="ECO:0000314"/>
    <property type="project" value="CGD"/>
</dbReference>
<dbReference type="GO" id="GO:0005782">
    <property type="term" value="C:peroxisomal matrix"/>
    <property type="evidence" value="ECO:0000304"/>
    <property type="project" value="CGD"/>
</dbReference>
<dbReference type="GO" id="GO:0000156">
    <property type="term" value="F:phosphorelay response regulator activity"/>
    <property type="evidence" value="ECO:0000315"/>
    <property type="project" value="CGD"/>
</dbReference>
<dbReference type="GO" id="GO:0006915">
    <property type="term" value="P:apoptotic process"/>
    <property type="evidence" value="ECO:0000315"/>
    <property type="project" value="CGD"/>
</dbReference>
<dbReference type="GO" id="GO:0036180">
    <property type="term" value="P:filamentous growth of a population of unicellular organisms in response to biotic stimulus"/>
    <property type="evidence" value="ECO:0000315"/>
    <property type="project" value="CGD"/>
</dbReference>
<dbReference type="GO" id="GO:0036178">
    <property type="term" value="P:filamentous growth of a population of unicellular organisms in response to neutral pH"/>
    <property type="evidence" value="ECO:0000315"/>
    <property type="project" value="CGD"/>
</dbReference>
<dbReference type="GO" id="GO:0036170">
    <property type="term" value="P:filamentous growth of a population of unicellular organisms in response to starvation"/>
    <property type="evidence" value="ECO:0000315"/>
    <property type="project" value="CGD"/>
</dbReference>
<dbReference type="GO" id="GO:0000160">
    <property type="term" value="P:phosphorelay signal transduction system"/>
    <property type="evidence" value="ECO:0000315"/>
    <property type="project" value="CGD"/>
</dbReference>
<dbReference type="GO" id="GO:1900445">
    <property type="term" value="P:positive regulation of filamentous growth of a population of unicellular organisms in response to biotic stimulus"/>
    <property type="evidence" value="ECO:0000315"/>
    <property type="project" value="CGD"/>
</dbReference>
<dbReference type="GO" id="GO:1900442">
    <property type="term" value="P:positive regulation of filamentous growth of a population of unicellular organisms in response to neutral pH"/>
    <property type="evidence" value="ECO:0000315"/>
    <property type="project" value="CGD"/>
</dbReference>
<dbReference type="GO" id="GO:1900436">
    <property type="term" value="P:positive regulation of filamentous growth of a population of unicellular organisms in response to starvation"/>
    <property type="evidence" value="ECO:0000315"/>
    <property type="project" value="CGD"/>
</dbReference>
<dbReference type="GO" id="GO:0006970">
    <property type="term" value="P:response to osmotic stress"/>
    <property type="evidence" value="ECO:0000315"/>
    <property type="project" value="CGD"/>
</dbReference>
<dbReference type="GO" id="GO:0006979">
    <property type="term" value="P:response to oxidative stress"/>
    <property type="evidence" value="ECO:0000315"/>
    <property type="project" value="CGD"/>
</dbReference>
<dbReference type="CDD" id="cd17546">
    <property type="entry name" value="REC_hyHK_CKI1_RcsC-like"/>
    <property type="match status" value="1"/>
</dbReference>
<dbReference type="Gene3D" id="3.40.50.2300">
    <property type="match status" value="1"/>
</dbReference>
<dbReference type="InterPro" id="IPR050595">
    <property type="entry name" value="Bact_response_regulator"/>
</dbReference>
<dbReference type="InterPro" id="IPR011006">
    <property type="entry name" value="CheY-like_superfamily"/>
</dbReference>
<dbReference type="InterPro" id="IPR001789">
    <property type="entry name" value="Sig_transdc_resp-reg_receiver"/>
</dbReference>
<dbReference type="PANTHER" id="PTHR44591:SF3">
    <property type="entry name" value="RESPONSE REGULATORY DOMAIN-CONTAINING PROTEIN"/>
    <property type="match status" value="1"/>
</dbReference>
<dbReference type="PANTHER" id="PTHR44591">
    <property type="entry name" value="STRESS RESPONSE REGULATOR PROTEIN 1"/>
    <property type="match status" value="1"/>
</dbReference>
<dbReference type="Pfam" id="PF00072">
    <property type="entry name" value="Response_reg"/>
    <property type="match status" value="1"/>
</dbReference>
<dbReference type="SMART" id="SM00448">
    <property type="entry name" value="REC"/>
    <property type="match status" value="1"/>
</dbReference>
<dbReference type="SUPFAM" id="SSF52172">
    <property type="entry name" value="CheY-like"/>
    <property type="match status" value="1"/>
</dbReference>
<dbReference type="PROSITE" id="PS50110">
    <property type="entry name" value="RESPONSE_REGULATORY"/>
    <property type="match status" value="1"/>
</dbReference>
<proteinExistence type="inferred from homology"/>